<evidence type="ECO:0000250" key="1">
    <source>
        <dbReference type="UniProtKB" id="Q9Y2G7"/>
    </source>
</evidence>
<evidence type="ECO:0000255" key="2">
    <source>
        <dbReference type="PROSITE-ProRule" id="PRU00042"/>
    </source>
</evidence>
<evidence type="ECO:0000255" key="3">
    <source>
        <dbReference type="PROSITE-ProRule" id="PRU00119"/>
    </source>
</evidence>
<evidence type="ECO:0000269" key="4">
    <source>
    </source>
</evidence>
<evidence type="ECO:0000269" key="5">
    <source>
    </source>
</evidence>
<evidence type="ECO:0000269" key="6">
    <source>
    </source>
</evidence>
<evidence type="ECO:0000269" key="7">
    <source>
    </source>
</evidence>
<evidence type="ECO:0000303" key="8">
    <source>
    </source>
</evidence>
<evidence type="ECO:0000303" key="9">
    <source>
    </source>
</evidence>
<evidence type="ECO:0000305" key="10"/>
<organism>
    <name type="scientific">Homo sapiens</name>
    <name type="common">Human</name>
    <dbReference type="NCBI Taxonomy" id="9606"/>
    <lineage>
        <taxon>Eukaryota</taxon>
        <taxon>Metazoa</taxon>
        <taxon>Chordata</taxon>
        <taxon>Craniata</taxon>
        <taxon>Vertebrata</taxon>
        <taxon>Euteleostomi</taxon>
        <taxon>Mammalia</taxon>
        <taxon>Eutheria</taxon>
        <taxon>Euarchontoglires</taxon>
        <taxon>Primates</taxon>
        <taxon>Haplorrhini</taxon>
        <taxon>Catarrhini</taxon>
        <taxon>Hominidae</taxon>
        <taxon>Homo</taxon>
    </lineage>
</organism>
<comment type="function">
    <text evidence="5">May act as a transcriptional repressor.</text>
</comment>
<comment type="subunit">
    <text>May interact with MVP.</text>
</comment>
<comment type="subcellular location">
    <subcellularLocation>
        <location evidence="5">Nucleus</location>
    </subcellularLocation>
    <subcellularLocation>
        <location evidence="5">Cytoplasm</location>
    </subcellularLocation>
</comment>
<comment type="alternative products">
    <event type="alternative splicing"/>
    <isoform>
        <id>Q8NDQ6-1</id>
        <name>1</name>
        <sequence type="displayed"/>
    </isoform>
    <isoform>
        <id>Q8NDQ6-2</id>
        <name>2</name>
        <sequence type="described" ref="VSP_016037"/>
    </isoform>
    <isoform>
        <id>Q8NDQ6-4</id>
        <name>4</name>
        <sequence type="described" ref="VSP_016036"/>
    </isoform>
</comment>
<comment type="tissue specificity">
    <text evidence="5">Expressed in several fetal tissues, including gut, heart, brain, muscle, lung, testis and liver.</text>
</comment>
<comment type="similarity">
    <text evidence="10">Belongs to the krueppel C2H2-type zinc-finger protein family.</text>
</comment>
<comment type="sequence caution" evidence="10">
    <conflict type="miscellaneous discrepancy">
        <sequence resource="EMBL-CDS" id="AAH17940"/>
    </conflict>
    <text>Contaminating sequence. Potential poly-A sequence.</text>
</comment>
<comment type="sequence caution" evidence="10">
    <conflict type="frameshift">
        <sequence resource="EMBL-CDS" id="CAD97942"/>
    </conflict>
</comment>
<reference key="1">
    <citation type="journal article" date="2004" name="Nat. Genet.">
        <title>Complete sequencing and characterization of 21,243 full-length human cDNAs.</title>
        <authorList>
            <person name="Ota T."/>
            <person name="Suzuki Y."/>
            <person name="Nishikawa T."/>
            <person name="Otsuki T."/>
            <person name="Sugiyama T."/>
            <person name="Irie R."/>
            <person name="Wakamatsu A."/>
            <person name="Hayashi K."/>
            <person name="Sato H."/>
            <person name="Nagai K."/>
            <person name="Kimura K."/>
            <person name="Makita H."/>
            <person name="Sekine M."/>
            <person name="Obayashi M."/>
            <person name="Nishi T."/>
            <person name="Shibahara T."/>
            <person name="Tanaka T."/>
            <person name="Ishii S."/>
            <person name="Yamamoto J."/>
            <person name="Saito K."/>
            <person name="Kawai Y."/>
            <person name="Isono Y."/>
            <person name="Nakamura Y."/>
            <person name="Nagahari K."/>
            <person name="Murakami K."/>
            <person name="Yasuda T."/>
            <person name="Iwayanagi T."/>
            <person name="Wagatsuma M."/>
            <person name="Shiratori A."/>
            <person name="Sudo H."/>
            <person name="Hosoiri T."/>
            <person name="Kaku Y."/>
            <person name="Kodaira H."/>
            <person name="Kondo H."/>
            <person name="Sugawara M."/>
            <person name="Takahashi M."/>
            <person name="Kanda K."/>
            <person name="Yokoi T."/>
            <person name="Furuya T."/>
            <person name="Kikkawa E."/>
            <person name="Omura Y."/>
            <person name="Abe K."/>
            <person name="Kamihara K."/>
            <person name="Katsuta N."/>
            <person name="Sato K."/>
            <person name="Tanikawa M."/>
            <person name="Yamazaki M."/>
            <person name="Ninomiya K."/>
            <person name="Ishibashi T."/>
            <person name="Yamashita H."/>
            <person name="Murakawa K."/>
            <person name="Fujimori K."/>
            <person name="Tanai H."/>
            <person name="Kimata M."/>
            <person name="Watanabe M."/>
            <person name="Hiraoka S."/>
            <person name="Chiba Y."/>
            <person name="Ishida S."/>
            <person name="Ono Y."/>
            <person name="Takiguchi S."/>
            <person name="Watanabe S."/>
            <person name="Yosida M."/>
            <person name="Hotuta T."/>
            <person name="Kusano J."/>
            <person name="Kanehori K."/>
            <person name="Takahashi-Fujii A."/>
            <person name="Hara H."/>
            <person name="Tanase T.-O."/>
            <person name="Nomura Y."/>
            <person name="Togiya S."/>
            <person name="Komai F."/>
            <person name="Hara R."/>
            <person name="Takeuchi K."/>
            <person name="Arita M."/>
            <person name="Imose N."/>
            <person name="Musashino K."/>
            <person name="Yuuki H."/>
            <person name="Oshima A."/>
            <person name="Sasaki N."/>
            <person name="Aotsuka S."/>
            <person name="Yoshikawa Y."/>
            <person name="Matsunawa H."/>
            <person name="Ichihara T."/>
            <person name="Shiohata N."/>
            <person name="Sano S."/>
            <person name="Moriya S."/>
            <person name="Momiyama H."/>
            <person name="Satoh N."/>
            <person name="Takami S."/>
            <person name="Terashima Y."/>
            <person name="Suzuki O."/>
            <person name="Nakagawa S."/>
            <person name="Senoh A."/>
            <person name="Mizoguchi H."/>
            <person name="Goto Y."/>
            <person name="Shimizu F."/>
            <person name="Wakebe H."/>
            <person name="Hishigaki H."/>
            <person name="Watanabe T."/>
            <person name="Sugiyama A."/>
            <person name="Takemoto M."/>
            <person name="Kawakami B."/>
            <person name="Yamazaki M."/>
            <person name="Watanabe K."/>
            <person name="Kumagai A."/>
            <person name="Itakura S."/>
            <person name="Fukuzumi Y."/>
            <person name="Fujimori Y."/>
            <person name="Komiyama M."/>
            <person name="Tashiro H."/>
            <person name="Tanigami A."/>
            <person name="Fujiwara T."/>
            <person name="Ono T."/>
            <person name="Yamada K."/>
            <person name="Fujii Y."/>
            <person name="Ozaki K."/>
            <person name="Hirao M."/>
            <person name="Ohmori Y."/>
            <person name="Kawabata A."/>
            <person name="Hikiji T."/>
            <person name="Kobatake N."/>
            <person name="Inagaki H."/>
            <person name="Ikema Y."/>
            <person name="Okamoto S."/>
            <person name="Okitani R."/>
            <person name="Kawakami T."/>
            <person name="Noguchi S."/>
            <person name="Itoh T."/>
            <person name="Shigeta K."/>
            <person name="Senba T."/>
            <person name="Matsumura K."/>
            <person name="Nakajima Y."/>
            <person name="Mizuno T."/>
            <person name="Morinaga M."/>
            <person name="Sasaki M."/>
            <person name="Togashi T."/>
            <person name="Oyama M."/>
            <person name="Hata H."/>
            <person name="Watanabe M."/>
            <person name="Komatsu T."/>
            <person name="Mizushima-Sugano J."/>
            <person name="Satoh T."/>
            <person name="Shirai Y."/>
            <person name="Takahashi Y."/>
            <person name="Nakagawa K."/>
            <person name="Okumura K."/>
            <person name="Nagase T."/>
            <person name="Nomura N."/>
            <person name="Kikuchi H."/>
            <person name="Masuho Y."/>
            <person name="Yamashita R."/>
            <person name="Nakai K."/>
            <person name="Yada T."/>
            <person name="Nakamura Y."/>
            <person name="Ohara O."/>
            <person name="Isogai T."/>
            <person name="Sugano S."/>
        </authorList>
    </citation>
    <scope>NUCLEOTIDE SEQUENCE [LARGE SCALE MRNA] (ISOFORMS 1 AND 4)</scope>
    <scope>VARIANT VAL-53</scope>
    <source>
        <tissue>Hippocampus</tissue>
    </source>
</reference>
<reference key="2">
    <citation type="journal article" date="2007" name="BMC Genomics">
        <title>The full-ORF clone resource of the German cDNA consortium.</title>
        <authorList>
            <person name="Bechtel S."/>
            <person name="Rosenfelder H."/>
            <person name="Duda A."/>
            <person name="Schmidt C.P."/>
            <person name="Ernst U."/>
            <person name="Wellenreuther R."/>
            <person name="Mehrle A."/>
            <person name="Schuster C."/>
            <person name="Bahr A."/>
            <person name="Bloecker H."/>
            <person name="Heubner D."/>
            <person name="Hoerlein A."/>
            <person name="Michel G."/>
            <person name="Wedler H."/>
            <person name="Koehrer K."/>
            <person name="Ottenwaelder B."/>
            <person name="Poustka A."/>
            <person name="Wiemann S."/>
            <person name="Schupp I."/>
        </authorList>
    </citation>
    <scope>NUCLEOTIDE SEQUENCE [LARGE SCALE MRNA] (ISOFORMS 1 AND 2)</scope>
    <source>
        <tissue>Brain</tissue>
        <tissue>Heart</tissue>
    </source>
</reference>
<reference key="3">
    <citation type="journal article" date="2004" name="Genome Res.">
        <title>The status, quality, and expansion of the NIH full-length cDNA project: the Mammalian Gene Collection (MGC).</title>
        <authorList>
            <consortium name="The MGC Project Team"/>
        </authorList>
    </citation>
    <scope>NUCLEOTIDE SEQUENCE [LARGE SCALE MRNA] (ISOFORM 1)</scope>
    <source>
        <tissue>Brain</tissue>
    </source>
</reference>
<reference key="4">
    <citation type="journal article" date="2003" name="Cancer Lett.">
        <title>Neuroblastoma oligo-capping cDNA project: toward the understanding of the genesis and biology of neuroblastoma.</title>
        <authorList>
            <person name="Ohira M."/>
            <person name="Morohashi A."/>
            <person name="Nakamura Y."/>
            <person name="Isogai E."/>
            <person name="Furuya K."/>
            <person name="Hamano S."/>
            <person name="Machida T."/>
            <person name="Aoyama M."/>
            <person name="Fukumura M."/>
            <person name="Miyazaki K."/>
            <person name="Suzuki Y."/>
            <person name="Sugano S."/>
            <person name="Hirato J."/>
            <person name="Nakagawara A."/>
        </authorList>
    </citation>
    <scope>NUCLEOTIDE SEQUENCE [LARGE SCALE MRNA] OF 318-660</scope>
    <source>
        <tissue>Neuroblastoma</tissue>
    </source>
</reference>
<reference key="5">
    <citation type="journal article" date="2006" name="Biochem. Biophys. Res. Commun.">
        <title>A novel human zinc finger protein ZNF540 interacts with MVP and inhibits transcriptional activities of the ERK signal pathway.</title>
        <authorList>
            <person name="Xiang Z."/>
            <person name="Yuan W."/>
            <person name="Luo N."/>
            <person name="Wang Y."/>
            <person name="Tan K."/>
            <person name="Deng Y."/>
            <person name="Zhou X."/>
            <person name="Zhu C."/>
            <person name="Li Y."/>
            <person name="Liu M."/>
            <person name="Wu X."/>
            <person name="Li Y."/>
        </authorList>
    </citation>
    <scope>FUNCTION</scope>
    <scope>SUBCELLULAR LOCATION</scope>
    <scope>INTERACTION WITH MVP</scope>
    <scope>TISSUE SPECIFICITY</scope>
</reference>
<reference key="6">
    <citation type="journal article" date="2006" name="Science">
        <title>The consensus coding sequences of human breast and colorectal cancers.</title>
        <authorList>
            <person name="Sjoeblom T."/>
            <person name="Jones S."/>
            <person name="Wood L.D."/>
            <person name="Parsons D.W."/>
            <person name="Lin J."/>
            <person name="Barber T.D."/>
            <person name="Mandelker D."/>
            <person name="Leary R.J."/>
            <person name="Ptak J."/>
            <person name="Silliman N."/>
            <person name="Szabo S."/>
            <person name="Buckhaults P."/>
            <person name="Farrell C."/>
            <person name="Meeh P."/>
            <person name="Markowitz S.D."/>
            <person name="Willis J."/>
            <person name="Dawson D."/>
            <person name="Willson J.K.V."/>
            <person name="Gazdar A.F."/>
            <person name="Hartigan J."/>
            <person name="Wu L."/>
            <person name="Liu C."/>
            <person name="Parmigiani G."/>
            <person name="Park B.H."/>
            <person name="Bachman K.E."/>
            <person name="Papadopoulos N."/>
            <person name="Vogelstein B."/>
            <person name="Kinzler K.W."/>
            <person name="Velculescu V.E."/>
        </authorList>
    </citation>
    <scope>VARIANT [LARGE SCALE ANALYSIS] ILE-275</scope>
</reference>
<reference key="7">
    <citation type="journal article" date="2012" name="N. Engl. J. Med.">
        <title>Diagnostic exome sequencing in persons with severe intellectual disability.</title>
        <authorList>
            <person name="de Ligt J."/>
            <person name="Willemsen M.H."/>
            <person name="van Bon B.W."/>
            <person name="Kleefstra T."/>
            <person name="Yntema H.G."/>
            <person name="Kroes T."/>
            <person name="Vulto-van Silfhout A.T."/>
            <person name="Koolen D.A."/>
            <person name="de Vries P."/>
            <person name="Gilissen C."/>
            <person name="del Rosario M."/>
            <person name="Hoischen A."/>
            <person name="Scheffer H."/>
            <person name="de Vries B.B."/>
            <person name="Brunner H.G."/>
            <person name="Veltman J.A."/>
            <person name="Vissers L.E."/>
        </authorList>
    </citation>
    <scope>VARIANT ARG-340</scope>
</reference>
<accession>Q8NDQ6</accession>
<accession>A0AVS5</accession>
<accession>A8K371</accession>
<accession>Q05D58</accession>
<accession>Q3LIC5</accession>
<accession>Q6ZN36</accession>
<accession>Q7Z3C8</accession>
<accession>Q86T31</accession>
<name>ZN540_HUMAN</name>
<gene>
    <name type="primary">ZNF540</name>
    <name type="ORF">Nbla10512</name>
</gene>
<sequence length="660" mass="77094">MAHALVTFRDVAIDFSQKEWECLDTTQRKLYRDVMLENYNNLVSLGYSGSKPDVITLLEQGKEPCVVARDVTGRQCPGLLSRHKTKKLSSEKDIHEISLSKESIIEKSKTLRLKGSIFRNEWQNKSEFEGQQGLKERSISQKKIVSKKMSTDRKRPSFTLNQRIHNSEKSCDSHLVQHGKIDSDVKHDCKECGSTFNNVYQLTLHQKIHTGEKSCKCEKCGKVFSHSYQLTLHQRFHTGEKPYECQECGKTFTLYPQLNRHQKIHTGKKPYMCKKCDKGFFSRLELTQHKRIHTGKKSYECKECGKVFQLIFYFKEHERIHTGKKPYECKECGKAFSVCGQLTRHQKIHTGVKPYECKECGKTFRLSFYLTEHRRTHAGKKPYECKECGKSFNVRGQLNRHKTIHTGIKPFACKVCEKAFSYSGDLRVHSRIHTGEKPYECKECGKAFMLRSVLTEHQRLHTGVKPYECKECGKTFRVRSQISLHKKIHTDVKPYKCVRCGKTFRFGFYLTEHQRIHTGEKPYKCKECGKAFIRRGNLKEHLKIHSGLKPYDCKECGKSFSRRGQFTEHQKIHTGVKPYKCKECGKAFSRSVDLRIHQRIHTGEKPYECKQCGKAFRLNSHLTEHQRIHTGEKPYECKVCRKAFRQYSHLYQHQKTHNVI</sequence>
<protein>
    <recommendedName>
        <fullName>Zinc finger protein 540</fullName>
    </recommendedName>
</protein>
<proteinExistence type="evidence at protein level"/>
<feature type="chain" id="PRO_0000047641" description="Zinc finger protein 540">
    <location>
        <begin position="1"/>
        <end position="660"/>
    </location>
</feature>
<feature type="domain" description="KRAB" evidence="3">
    <location>
        <begin position="6"/>
        <end position="77"/>
    </location>
</feature>
<feature type="zinc finger region" description="C2H2-type 1" evidence="2">
    <location>
        <begin position="187"/>
        <end position="209"/>
    </location>
</feature>
<feature type="zinc finger region" description="C2H2-type 2" evidence="2">
    <location>
        <begin position="215"/>
        <end position="237"/>
    </location>
</feature>
<feature type="zinc finger region" description="C2H2-type 3" evidence="2">
    <location>
        <begin position="243"/>
        <end position="265"/>
    </location>
</feature>
<feature type="zinc finger region" description="C2H2-type 4" evidence="2">
    <location>
        <begin position="271"/>
        <end position="293"/>
    </location>
</feature>
<feature type="zinc finger region" description="C2H2-type 5" evidence="2">
    <location>
        <begin position="299"/>
        <end position="321"/>
    </location>
</feature>
<feature type="zinc finger region" description="C2H2-type 6" evidence="2">
    <location>
        <begin position="327"/>
        <end position="349"/>
    </location>
</feature>
<feature type="zinc finger region" description="C2H2-type 7" evidence="2">
    <location>
        <begin position="355"/>
        <end position="377"/>
    </location>
</feature>
<feature type="zinc finger region" description="C2H2-type 8" evidence="2">
    <location>
        <begin position="383"/>
        <end position="405"/>
    </location>
</feature>
<feature type="zinc finger region" description="C2H2-type 9" evidence="2">
    <location>
        <begin position="411"/>
        <end position="433"/>
    </location>
</feature>
<feature type="zinc finger region" description="C2H2-type 10" evidence="2">
    <location>
        <begin position="439"/>
        <end position="461"/>
    </location>
</feature>
<feature type="zinc finger region" description="C2H2-type 11" evidence="2">
    <location>
        <begin position="467"/>
        <end position="489"/>
    </location>
</feature>
<feature type="zinc finger region" description="C2H2-type 12" evidence="2">
    <location>
        <begin position="495"/>
        <end position="517"/>
    </location>
</feature>
<feature type="zinc finger region" description="C2H2-type 13" evidence="2">
    <location>
        <begin position="523"/>
        <end position="545"/>
    </location>
</feature>
<feature type="zinc finger region" description="C2H2-type 14" evidence="2">
    <location>
        <begin position="551"/>
        <end position="573"/>
    </location>
</feature>
<feature type="zinc finger region" description="C2H2-type 15" evidence="2">
    <location>
        <begin position="579"/>
        <end position="601"/>
    </location>
</feature>
<feature type="zinc finger region" description="C2H2-type 16" evidence="2">
    <location>
        <begin position="607"/>
        <end position="629"/>
    </location>
</feature>
<feature type="zinc finger region" description="C2H2-type 17" evidence="2">
    <location>
        <begin position="635"/>
        <end position="657"/>
    </location>
</feature>
<feature type="cross-link" description="Glycyl lysine isopeptide (Lys-Gly) (interchain with G-Cter in SUMO2)" evidence="1">
    <location>
        <position position="109"/>
    </location>
</feature>
<feature type="splice variant" id="VSP_016036" description="In isoform 4." evidence="8">
    <original>MAHALVTFRDVAIDFSQKEWECLDTTQRKLYRDVMLENYNNLVSLGYSGSKPDVITLLEQGKEPCVVARDVTGRQCP</original>
    <variation>MLPNFKLYNFIEIFFKPLTPSKNRFHFVSYFENVNFMLCWLQENNFCLLLCFLS</variation>
    <location>
        <begin position="1"/>
        <end position="77"/>
    </location>
</feature>
<feature type="splice variant" id="VSP_016037" description="In isoform 2." evidence="9">
    <location>
        <begin position="46"/>
        <end position="77"/>
    </location>
</feature>
<feature type="sequence variant" id="VAR_033575" description="In dbSNP:rs1975937." evidence="4">
    <original>D</original>
    <variation>V</variation>
    <location>
        <position position="53"/>
    </location>
</feature>
<feature type="sequence variant" id="VAR_035586" description="In a colorectal cancer sample; somatic mutation." evidence="6">
    <original>K</original>
    <variation>I</variation>
    <location>
        <position position="275"/>
    </location>
</feature>
<feature type="sequence variant" id="VAR_069366" description="In dbSNP:rs571893947." evidence="7">
    <original>G</original>
    <variation>R</variation>
    <location>
        <position position="340"/>
    </location>
</feature>
<feature type="sequence conflict" description="In Ref. 2; CAD97942." evidence="10" ref="2">
    <original>E</original>
    <variation>G</variation>
    <location>
        <position position="127"/>
    </location>
</feature>
<dbReference type="EMBL" id="AK131388">
    <property type="protein sequence ID" value="BAD18539.1"/>
    <property type="molecule type" value="mRNA"/>
</dbReference>
<dbReference type="EMBL" id="AK290486">
    <property type="protein sequence ID" value="BAF83175.1"/>
    <property type="molecule type" value="mRNA"/>
</dbReference>
<dbReference type="EMBL" id="AL832100">
    <property type="protein sequence ID" value="CAD91161.1"/>
    <property type="molecule type" value="mRNA"/>
</dbReference>
<dbReference type="EMBL" id="AL832315">
    <property type="protein sequence ID" value="CAD38611.1"/>
    <property type="molecule type" value="mRNA"/>
</dbReference>
<dbReference type="EMBL" id="BX537980">
    <property type="protein sequence ID" value="CAD97942.1"/>
    <property type="status" value="ALT_FRAME"/>
    <property type="molecule type" value="mRNA"/>
</dbReference>
<dbReference type="EMBL" id="BC017940">
    <property type="protein sequence ID" value="AAH17940.1"/>
    <property type="status" value="ALT_SEQ"/>
    <property type="molecule type" value="mRNA"/>
</dbReference>
<dbReference type="EMBL" id="BC126478">
    <property type="protein sequence ID" value="AAI26479.1"/>
    <property type="molecule type" value="mRNA"/>
</dbReference>
<dbReference type="EMBL" id="BC126480">
    <property type="protein sequence ID" value="AAI26481.1"/>
    <property type="molecule type" value="mRNA"/>
</dbReference>
<dbReference type="EMBL" id="AB074186">
    <property type="protein sequence ID" value="BAE45743.1"/>
    <property type="molecule type" value="mRNA"/>
</dbReference>
<dbReference type="CCDS" id="CCDS54258.1">
    <molecule id="Q8NDQ6-2"/>
</dbReference>
<dbReference type="RefSeq" id="NP_001165696.1">
    <molecule id="Q8NDQ6-1"/>
    <property type="nucleotide sequence ID" value="NM_001172225.3"/>
</dbReference>
<dbReference type="RefSeq" id="NP_001165697.1">
    <molecule id="Q8NDQ6-2"/>
    <property type="nucleotide sequence ID" value="NM_001172226.3"/>
</dbReference>
<dbReference type="RefSeq" id="NP_689819.1">
    <molecule id="Q8NDQ6-1"/>
    <property type="nucleotide sequence ID" value="NM_152606.5"/>
</dbReference>
<dbReference type="SMR" id="Q8NDQ6"/>
<dbReference type="BioGRID" id="127861">
    <property type="interactions" value="3"/>
</dbReference>
<dbReference type="FunCoup" id="Q8NDQ6">
    <property type="interactions" value="1369"/>
</dbReference>
<dbReference type="IntAct" id="Q8NDQ6">
    <property type="interactions" value="1"/>
</dbReference>
<dbReference type="STRING" id="9606.ENSP00000324598"/>
<dbReference type="iPTMnet" id="Q8NDQ6"/>
<dbReference type="PhosphoSitePlus" id="Q8NDQ6"/>
<dbReference type="BioMuta" id="ZNF540"/>
<dbReference type="DMDM" id="74762556"/>
<dbReference type="jPOST" id="Q8NDQ6"/>
<dbReference type="MassIVE" id="Q8NDQ6"/>
<dbReference type="PaxDb" id="9606-ENSP00000466274"/>
<dbReference type="PeptideAtlas" id="Q8NDQ6"/>
<dbReference type="Antibodypedia" id="836">
    <property type="antibodies" value="91 antibodies from 15 providers"/>
</dbReference>
<dbReference type="DNASU" id="163255"/>
<dbReference type="Ensembl" id="ENST00000316433.9">
    <molecule id="Q8NDQ6-1"/>
    <property type="protein sequence ID" value="ENSP00000324598.3"/>
    <property type="gene ID" value="ENSG00000171817.17"/>
</dbReference>
<dbReference type="Ensembl" id="ENST00000343599.5">
    <molecule id="Q8NDQ6-1"/>
    <property type="protein sequence ID" value="ENSP00000343768.5"/>
    <property type="gene ID" value="ENSG00000171817.17"/>
</dbReference>
<dbReference type="Ensembl" id="ENST00000589117.5">
    <molecule id="Q8NDQ6-2"/>
    <property type="protein sequence ID" value="ENSP00000467118.1"/>
    <property type="gene ID" value="ENSG00000171817.17"/>
</dbReference>
<dbReference type="Ensembl" id="ENST00000592533.5">
    <molecule id="Q8NDQ6-1"/>
    <property type="protein sequence ID" value="ENSP00000466274.1"/>
    <property type="gene ID" value="ENSG00000171817.17"/>
</dbReference>
<dbReference type="GeneID" id="163255"/>
<dbReference type="KEGG" id="hsa:163255"/>
<dbReference type="MANE-Select" id="ENST00000316433.9">
    <property type="protein sequence ID" value="ENSP00000324598.3"/>
    <property type="RefSeq nucleotide sequence ID" value="NM_001172225.3"/>
    <property type="RefSeq protein sequence ID" value="NP_001165696.1"/>
</dbReference>
<dbReference type="UCSC" id="uc002ogq.5">
    <molecule id="Q8NDQ6-1"/>
    <property type="organism name" value="human"/>
</dbReference>
<dbReference type="AGR" id="HGNC:25331"/>
<dbReference type="CTD" id="163255"/>
<dbReference type="DisGeNET" id="163255"/>
<dbReference type="GeneCards" id="ZNF540"/>
<dbReference type="HGNC" id="HGNC:25331">
    <property type="gene designation" value="ZNF540"/>
</dbReference>
<dbReference type="HPA" id="ENSG00000171817">
    <property type="expression patterns" value="Tissue enhanced (retina)"/>
</dbReference>
<dbReference type="MIM" id="613903">
    <property type="type" value="gene"/>
</dbReference>
<dbReference type="neXtProt" id="NX_Q8NDQ6"/>
<dbReference type="OpenTargets" id="ENSG00000171817"/>
<dbReference type="PharmGKB" id="PA134980975"/>
<dbReference type="VEuPathDB" id="HostDB:ENSG00000171817"/>
<dbReference type="eggNOG" id="KOG1721">
    <property type="taxonomic scope" value="Eukaryota"/>
</dbReference>
<dbReference type="GeneTree" id="ENSGT00940000164340"/>
<dbReference type="HOGENOM" id="CLU_002678_44_5_1"/>
<dbReference type="InParanoid" id="Q8NDQ6"/>
<dbReference type="OMA" id="SWRGQFT"/>
<dbReference type="OrthoDB" id="9411774at2759"/>
<dbReference type="PAN-GO" id="Q8NDQ6">
    <property type="GO annotations" value="4 GO annotations based on evolutionary models"/>
</dbReference>
<dbReference type="PhylomeDB" id="Q8NDQ6"/>
<dbReference type="PathwayCommons" id="Q8NDQ6"/>
<dbReference type="Reactome" id="R-HSA-212436">
    <property type="pathway name" value="Generic Transcription Pathway"/>
</dbReference>
<dbReference type="BioGRID-ORCS" id="163255">
    <property type="hits" value="18 hits in 1170 CRISPR screens"/>
</dbReference>
<dbReference type="ChiTaRS" id="ZNF540">
    <property type="organism name" value="human"/>
</dbReference>
<dbReference type="GenomeRNAi" id="163255"/>
<dbReference type="Pharos" id="Q8NDQ6">
    <property type="development level" value="Tbio"/>
</dbReference>
<dbReference type="PRO" id="PR:Q8NDQ6"/>
<dbReference type="Proteomes" id="UP000005640">
    <property type="component" value="Chromosome 19"/>
</dbReference>
<dbReference type="RNAct" id="Q8NDQ6">
    <property type="molecule type" value="protein"/>
</dbReference>
<dbReference type="Bgee" id="ENSG00000171817">
    <property type="expression patterns" value="Expressed in middle temporal gyrus and 132 other cell types or tissues"/>
</dbReference>
<dbReference type="ExpressionAtlas" id="Q8NDQ6">
    <property type="expression patterns" value="baseline and differential"/>
</dbReference>
<dbReference type="GO" id="GO:0005737">
    <property type="term" value="C:cytoplasm"/>
    <property type="evidence" value="ECO:0000314"/>
    <property type="project" value="UniProtKB"/>
</dbReference>
<dbReference type="GO" id="GO:0005829">
    <property type="term" value="C:cytosol"/>
    <property type="evidence" value="ECO:0000314"/>
    <property type="project" value="HPA"/>
</dbReference>
<dbReference type="GO" id="GO:0043231">
    <property type="term" value="C:intracellular membrane-bounded organelle"/>
    <property type="evidence" value="ECO:0000314"/>
    <property type="project" value="HPA"/>
</dbReference>
<dbReference type="GO" id="GO:0005654">
    <property type="term" value="C:nucleoplasm"/>
    <property type="evidence" value="ECO:0000314"/>
    <property type="project" value="HPA"/>
</dbReference>
<dbReference type="GO" id="GO:0005634">
    <property type="term" value="C:nucleus"/>
    <property type="evidence" value="ECO:0000314"/>
    <property type="project" value="UniProtKB"/>
</dbReference>
<dbReference type="GO" id="GO:0000981">
    <property type="term" value="F:DNA-binding transcription factor activity, RNA polymerase II-specific"/>
    <property type="evidence" value="ECO:0000318"/>
    <property type="project" value="GO_Central"/>
</dbReference>
<dbReference type="GO" id="GO:0000900">
    <property type="term" value="F:mRNA regulatory element binding translation repressor activity"/>
    <property type="evidence" value="ECO:0000315"/>
    <property type="project" value="UniProtKB"/>
</dbReference>
<dbReference type="GO" id="GO:0000978">
    <property type="term" value="F:RNA polymerase II cis-regulatory region sequence-specific DNA binding"/>
    <property type="evidence" value="ECO:0000318"/>
    <property type="project" value="GO_Central"/>
</dbReference>
<dbReference type="GO" id="GO:0008270">
    <property type="term" value="F:zinc ion binding"/>
    <property type="evidence" value="ECO:0007669"/>
    <property type="project" value="UniProtKB-KW"/>
</dbReference>
<dbReference type="GO" id="GO:0045892">
    <property type="term" value="P:negative regulation of DNA-templated transcription"/>
    <property type="evidence" value="ECO:0000314"/>
    <property type="project" value="UniProtKB"/>
</dbReference>
<dbReference type="GO" id="GO:0017148">
    <property type="term" value="P:negative regulation of translation"/>
    <property type="evidence" value="ECO:0000315"/>
    <property type="project" value="UniProtKB"/>
</dbReference>
<dbReference type="GO" id="GO:0006357">
    <property type="term" value="P:regulation of transcription by RNA polymerase II"/>
    <property type="evidence" value="ECO:0000318"/>
    <property type="project" value="GO_Central"/>
</dbReference>
<dbReference type="CDD" id="cd07765">
    <property type="entry name" value="KRAB_A-box"/>
    <property type="match status" value="1"/>
</dbReference>
<dbReference type="FunFam" id="3.30.160.60:FF:003795">
    <property type="match status" value="1"/>
</dbReference>
<dbReference type="FunFam" id="3.30.160.60:FF:000020">
    <property type="entry name" value="Zinc finger protein 14 homolog"/>
    <property type="match status" value="3"/>
</dbReference>
<dbReference type="FunFam" id="3.30.160.60:FF:000178">
    <property type="entry name" value="Zinc finger protein 14 homolog"/>
    <property type="match status" value="2"/>
</dbReference>
<dbReference type="FunFam" id="3.30.160.60:FF:000551">
    <property type="entry name" value="zinc finger protein 197 isoform X1"/>
    <property type="match status" value="1"/>
</dbReference>
<dbReference type="FunFam" id="3.30.160.60:FF:000733">
    <property type="entry name" value="Zinc finger protein 236 variant"/>
    <property type="match status" value="1"/>
</dbReference>
<dbReference type="FunFam" id="3.30.160.60:FF:000204">
    <property type="entry name" value="Zinc finger protein 331"/>
    <property type="match status" value="1"/>
</dbReference>
<dbReference type="FunFam" id="3.30.160.60:FF:000690">
    <property type="entry name" value="Zinc finger protein 354C"/>
    <property type="match status" value="1"/>
</dbReference>
<dbReference type="FunFam" id="3.30.160.60:FF:001174">
    <property type="entry name" value="zinc finger protein 527 isoform X1"/>
    <property type="match status" value="1"/>
</dbReference>
<dbReference type="FunFam" id="3.30.160.60:FF:001505">
    <property type="entry name" value="Zinc finger protein 540"/>
    <property type="match status" value="1"/>
</dbReference>
<dbReference type="FunFam" id="3.30.160.60:FF:002254">
    <property type="entry name" value="Zinc finger protein 540"/>
    <property type="match status" value="3"/>
</dbReference>
<dbReference type="FunFam" id="3.30.160.60:FF:002257">
    <property type="entry name" value="Zinc finger protein 540"/>
    <property type="match status" value="1"/>
</dbReference>
<dbReference type="FunFam" id="3.30.160.60:FF:000094">
    <property type="entry name" value="Zinc finger protein 605"/>
    <property type="match status" value="1"/>
</dbReference>
<dbReference type="Gene3D" id="6.10.140.140">
    <property type="match status" value="1"/>
</dbReference>
<dbReference type="Gene3D" id="3.30.160.60">
    <property type="entry name" value="Classic Zinc Finger"/>
    <property type="match status" value="17"/>
</dbReference>
<dbReference type="InterPro" id="IPR050752">
    <property type="entry name" value="C2H2-ZF_domain"/>
</dbReference>
<dbReference type="InterPro" id="IPR001909">
    <property type="entry name" value="KRAB"/>
</dbReference>
<dbReference type="InterPro" id="IPR036051">
    <property type="entry name" value="KRAB_dom_sf"/>
</dbReference>
<dbReference type="InterPro" id="IPR036236">
    <property type="entry name" value="Znf_C2H2_sf"/>
</dbReference>
<dbReference type="InterPro" id="IPR013087">
    <property type="entry name" value="Znf_C2H2_type"/>
</dbReference>
<dbReference type="PANTHER" id="PTHR24384">
    <property type="entry name" value="FINGER PUTATIVE TRANSCRIPTION FACTOR FAMILY-RELATED"/>
    <property type="match status" value="1"/>
</dbReference>
<dbReference type="PANTHER" id="PTHR24384:SF235">
    <property type="entry name" value="ZINC FINGER PROTEIN 519"/>
    <property type="match status" value="1"/>
</dbReference>
<dbReference type="Pfam" id="PF01352">
    <property type="entry name" value="KRAB"/>
    <property type="match status" value="1"/>
</dbReference>
<dbReference type="Pfam" id="PF00096">
    <property type="entry name" value="zf-C2H2"/>
    <property type="match status" value="16"/>
</dbReference>
<dbReference type="Pfam" id="PF13912">
    <property type="entry name" value="zf-C2H2_6"/>
    <property type="match status" value="1"/>
</dbReference>
<dbReference type="SMART" id="SM00349">
    <property type="entry name" value="KRAB"/>
    <property type="match status" value="1"/>
</dbReference>
<dbReference type="SMART" id="SM00355">
    <property type="entry name" value="ZnF_C2H2"/>
    <property type="match status" value="17"/>
</dbReference>
<dbReference type="SUPFAM" id="SSF57667">
    <property type="entry name" value="beta-beta-alpha zinc fingers"/>
    <property type="match status" value="9"/>
</dbReference>
<dbReference type="SUPFAM" id="SSF109640">
    <property type="entry name" value="KRAB domain (Kruppel-associated box)"/>
    <property type="match status" value="1"/>
</dbReference>
<dbReference type="PROSITE" id="PS50805">
    <property type="entry name" value="KRAB"/>
    <property type="match status" value="1"/>
</dbReference>
<dbReference type="PROSITE" id="PS00028">
    <property type="entry name" value="ZINC_FINGER_C2H2_1"/>
    <property type="match status" value="17"/>
</dbReference>
<dbReference type="PROSITE" id="PS50157">
    <property type="entry name" value="ZINC_FINGER_C2H2_2"/>
    <property type="match status" value="17"/>
</dbReference>
<keyword id="KW-0025">Alternative splicing</keyword>
<keyword id="KW-0963">Cytoplasm</keyword>
<keyword id="KW-0238">DNA-binding</keyword>
<keyword id="KW-1017">Isopeptide bond</keyword>
<keyword id="KW-0479">Metal-binding</keyword>
<keyword id="KW-0539">Nucleus</keyword>
<keyword id="KW-1267">Proteomics identification</keyword>
<keyword id="KW-1185">Reference proteome</keyword>
<keyword id="KW-0677">Repeat</keyword>
<keyword id="KW-0678">Repressor</keyword>
<keyword id="KW-0804">Transcription</keyword>
<keyword id="KW-0805">Transcription regulation</keyword>
<keyword id="KW-0832">Ubl conjugation</keyword>
<keyword id="KW-0862">Zinc</keyword>
<keyword id="KW-0863">Zinc-finger</keyword>